<proteinExistence type="inferred from homology"/>
<sequence>MVVEKRNPIPVKEAIQRIVNQQSSMPAITVALEKSLNHILAEDIVATYDIPRFDKSPYDGFAIRSVDSQGASGQNRIEFKVIDHIGAGSVSDKLVGDHEAVRIMTGAQIPNGADAVVMFEQTIELEDTFTIRKPFSKNENISLKGEETTTGDVVLKKGQVINPGAIAVLATYGYAEVKVIKQPSVAVIATGSELLDVNDVLEDGKIRNSNGPMIRALAEKLGLEVGIYKTQKDDLDSGIQVVKEAMEKHDIVITTGGVSVGDFDYLPEIYKAVKAEVLFNKVAMRPGSVTTVAFVDGKYLFGLSGNPSACFTGFELFVKPAVKHMCGALEVFPQIIKATLMEDFTKANPFTRFIRAKATLTSAGATVVPSGFNKSGAVVAIAHANCMVMLPGGSRGFKAGHTVDIILTESDAAEEELLL</sequence>
<evidence type="ECO:0000250" key="1"/>
<evidence type="ECO:0000305" key="2"/>
<comment type="function">
    <text evidence="1">Catalyzes the insertion of molybdate into adenylated molybdopterin with the concomitant release of AMP.</text>
</comment>
<comment type="catalytic activity">
    <reaction>
        <text>adenylyl-molybdopterin + molybdate = Mo-molybdopterin + AMP + H(+)</text>
        <dbReference type="Rhea" id="RHEA:35047"/>
        <dbReference type="ChEBI" id="CHEBI:15378"/>
        <dbReference type="ChEBI" id="CHEBI:36264"/>
        <dbReference type="ChEBI" id="CHEBI:62727"/>
        <dbReference type="ChEBI" id="CHEBI:71302"/>
        <dbReference type="ChEBI" id="CHEBI:456215"/>
        <dbReference type="EC" id="2.10.1.1"/>
    </reaction>
</comment>
<comment type="cofactor">
    <cofactor evidence="1">
        <name>Mg(2+)</name>
        <dbReference type="ChEBI" id="CHEBI:18420"/>
    </cofactor>
    <text evidence="1">Binds 1 Mg(2+) ion per subunit.</text>
</comment>
<comment type="pathway">
    <text>Cofactor biosynthesis; molybdopterin biosynthesis.</text>
</comment>
<comment type="similarity">
    <text evidence="2">Belongs to the MoeA family.</text>
</comment>
<dbReference type="EC" id="2.10.1.1"/>
<dbReference type="EMBL" id="BX571857">
    <property type="protein sequence ID" value="CAG43974.1"/>
    <property type="molecule type" value="Genomic_DNA"/>
</dbReference>
<dbReference type="SMR" id="Q6G749"/>
<dbReference type="KEGG" id="sas:SAS2163"/>
<dbReference type="HOGENOM" id="CLU_010186_7_1_9"/>
<dbReference type="UniPathway" id="UPA00344"/>
<dbReference type="GO" id="GO:0005829">
    <property type="term" value="C:cytosol"/>
    <property type="evidence" value="ECO:0007669"/>
    <property type="project" value="TreeGrafter"/>
</dbReference>
<dbReference type="GO" id="GO:0046872">
    <property type="term" value="F:metal ion binding"/>
    <property type="evidence" value="ECO:0007669"/>
    <property type="project" value="UniProtKB-KW"/>
</dbReference>
<dbReference type="GO" id="GO:0061599">
    <property type="term" value="F:molybdopterin molybdotransferase activity"/>
    <property type="evidence" value="ECO:0007669"/>
    <property type="project" value="UniProtKB-EC"/>
</dbReference>
<dbReference type="GO" id="GO:0006777">
    <property type="term" value="P:Mo-molybdopterin cofactor biosynthetic process"/>
    <property type="evidence" value="ECO:0007669"/>
    <property type="project" value="UniProtKB-KW"/>
</dbReference>
<dbReference type="CDD" id="cd00887">
    <property type="entry name" value="MoeA"/>
    <property type="match status" value="1"/>
</dbReference>
<dbReference type="FunFam" id="2.170.190.11:FF:000001">
    <property type="entry name" value="Molybdopterin molybdenumtransferase"/>
    <property type="match status" value="1"/>
</dbReference>
<dbReference type="FunFam" id="2.40.340.10:FF:000002">
    <property type="entry name" value="Molybdopterin molybdenumtransferase"/>
    <property type="match status" value="1"/>
</dbReference>
<dbReference type="FunFam" id="3.40.980.10:FF:000004">
    <property type="entry name" value="Molybdopterin molybdenumtransferase"/>
    <property type="match status" value="1"/>
</dbReference>
<dbReference type="Gene3D" id="3.40.980.10">
    <property type="entry name" value="MoaB/Mog-like domain"/>
    <property type="match status" value="1"/>
</dbReference>
<dbReference type="Gene3D" id="2.40.340.10">
    <property type="entry name" value="MoeA, C-terminal, domain IV"/>
    <property type="match status" value="1"/>
</dbReference>
<dbReference type="Gene3D" id="3.90.105.10">
    <property type="entry name" value="Molybdopterin biosynthesis moea protein, domain 2"/>
    <property type="match status" value="1"/>
</dbReference>
<dbReference type="Gene3D" id="2.170.190.11">
    <property type="entry name" value="Molybdopterin biosynthesis moea protein, domain 3"/>
    <property type="match status" value="1"/>
</dbReference>
<dbReference type="InterPro" id="IPR036425">
    <property type="entry name" value="MoaB/Mog-like_dom_sf"/>
</dbReference>
<dbReference type="InterPro" id="IPR001453">
    <property type="entry name" value="MoaB/Mog_dom"/>
</dbReference>
<dbReference type="InterPro" id="IPR038987">
    <property type="entry name" value="MoeA-like"/>
</dbReference>
<dbReference type="InterPro" id="IPR005111">
    <property type="entry name" value="MoeA_C_domain_IV"/>
</dbReference>
<dbReference type="InterPro" id="IPR036688">
    <property type="entry name" value="MoeA_C_domain_IV_sf"/>
</dbReference>
<dbReference type="InterPro" id="IPR005110">
    <property type="entry name" value="MoeA_linker/N"/>
</dbReference>
<dbReference type="InterPro" id="IPR036135">
    <property type="entry name" value="MoeA_linker/N_sf"/>
</dbReference>
<dbReference type="NCBIfam" id="NF045515">
    <property type="entry name" value="Glp_gephyrin"/>
    <property type="match status" value="1"/>
</dbReference>
<dbReference type="NCBIfam" id="TIGR00177">
    <property type="entry name" value="molyb_syn"/>
    <property type="match status" value="1"/>
</dbReference>
<dbReference type="PANTHER" id="PTHR10192:SF5">
    <property type="entry name" value="GEPHYRIN"/>
    <property type="match status" value="1"/>
</dbReference>
<dbReference type="PANTHER" id="PTHR10192">
    <property type="entry name" value="MOLYBDOPTERIN BIOSYNTHESIS PROTEIN"/>
    <property type="match status" value="1"/>
</dbReference>
<dbReference type="Pfam" id="PF00994">
    <property type="entry name" value="MoCF_biosynth"/>
    <property type="match status" value="1"/>
</dbReference>
<dbReference type="Pfam" id="PF03454">
    <property type="entry name" value="MoeA_C"/>
    <property type="match status" value="1"/>
</dbReference>
<dbReference type="Pfam" id="PF03453">
    <property type="entry name" value="MoeA_N"/>
    <property type="match status" value="1"/>
</dbReference>
<dbReference type="SMART" id="SM00852">
    <property type="entry name" value="MoCF_biosynth"/>
    <property type="match status" value="1"/>
</dbReference>
<dbReference type="SUPFAM" id="SSF63867">
    <property type="entry name" value="MoeA C-terminal domain-like"/>
    <property type="match status" value="1"/>
</dbReference>
<dbReference type="SUPFAM" id="SSF63882">
    <property type="entry name" value="MoeA N-terminal region -like"/>
    <property type="match status" value="1"/>
</dbReference>
<dbReference type="SUPFAM" id="SSF53218">
    <property type="entry name" value="Molybdenum cofactor biosynthesis proteins"/>
    <property type="match status" value="1"/>
</dbReference>
<gene>
    <name type="primary">moeA</name>
    <name type="ordered locus">SAS2163</name>
</gene>
<feature type="chain" id="PRO_0000170998" description="Molybdopterin molybdenumtransferase">
    <location>
        <begin position="1"/>
        <end position="419"/>
    </location>
</feature>
<name>MOEA_STAAS</name>
<organism>
    <name type="scientific">Staphylococcus aureus (strain MSSA476)</name>
    <dbReference type="NCBI Taxonomy" id="282459"/>
    <lineage>
        <taxon>Bacteria</taxon>
        <taxon>Bacillati</taxon>
        <taxon>Bacillota</taxon>
        <taxon>Bacilli</taxon>
        <taxon>Bacillales</taxon>
        <taxon>Staphylococcaceae</taxon>
        <taxon>Staphylococcus</taxon>
    </lineage>
</organism>
<protein>
    <recommendedName>
        <fullName>Molybdopterin molybdenumtransferase</fullName>
        <shortName>MPT Mo-transferase</shortName>
        <ecNumber>2.10.1.1</ecNumber>
    </recommendedName>
</protein>
<accession>Q6G749</accession>
<keyword id="KW-0460">Magnesium</keyword>
<keyword id="KW-0479">Metal-binding</keyword>
<keyword id="KW-0500">Molybdenum</keyword>
<keyword id="KW-0501">Molybdenum cofactor biosynthesis</keyword>
<keyword id="KW-0808">Transferase</keyword>
<reference key="1">
    <citation type="journal article" date="2004" name="Proc. Natl. Acad. Sci. U.S.A.">
        <title>Complete genomes of two clinical Staphylococcus aureus strains: evidence for the rapid evolution of virulence and drug resistance.</title>
        <authorList>
            <person name="Holden M.T.G."/>
            <person name="Feil E.J."/>
            <person name="Lindsay J.A."/>
            <person name="Peacock S.J."/>
            <person name="Day N.P.J."/>
            <person name="Enright M.C."/>
            <person name="Foster T.J."/>
            <person name="Moore C.E."/>
            <person name="Hurst L."/>
            <person name="Atkin R."/>
            <person name="Barron A."/>
            <person name="Bason N."/>
            <person name="Bentley S.D."/>
            <person name="Chillingworth C."/>
            <person name="Chillingworth T."/>
            <person name="Churcher C."/>
            <person name="Clark L."/>
            <person name="Corton C."/>
            <person name="Cronin A."/>
            <person name="Doggett J."/>
            <person name="Dowd L."/>
            <person name="Feltwell T."/>
            <person name="Hance Z."/>
            <person name="Harris B."/>
            <person name="Hauser H."/>
            <person name="Holroyd S."/>
            <person name="Jagels K."/>
            <person name="James K.D."/>
            <person name="Lennard N."/>
            <person name="Line A."/>
            <person name="Mayes R."/>
            <person name="Moule S."/>
            <person name="Mungall K."/>
            <person name="Ormond D."/>
            <person name="Quail M.A."/>
            <person name="Rabbinowitsch E."/>
            <person name="Rutherford K.M."/>
            <person name="Sanders M."/>
            <person name="Sharp S."/>
            <person name="Simmonds M."/>
            <person name="Stevens K."/>
            <person name="Whitehead S."/>
            <person name="Barrell B.G."/>
            <person name="Spratt B.G."/>
            <person name="Parkhill J."/>
        </authorList>
    </citation>
    <scope>NUCLEOTIDE SEQUENCE [LARGE SCALE GENOMIC DNA]</scope>
    <source>
        <strain>MSSA476</strain>
    </source>
</reference>